<gene>
    <name type="primary">wdr91</name>
    <name type="synonym">hspc049l</name>
</gene>
<dbReference type="EMBL" id="AY423013">
    <property type="protein sequence ID" value="AAQ97989.1"/>
    <property type="status" value="ALT_INIT"/>
    <property type="molecule type" value="mRNA"/>
</dbReference>
<dbReference type="RefSeq" id="NP_991168.1">
    <property type="nucleotide sequence ID" value="NM_205605.1"/>
</dbReference>
<dbReference type="SMR" id="Q6TEN6"/>
<dbReference type="FunCoup" id="Q6TEN6">
    <property type="interactions" value="433"/>
</dbReference>
<dbReference type="STRING" id="7955.ENSDARP00000126101"/>
<dbReference type="iPTMnet" id="Q6TEN6"/>
<dbReference type="PaxDb" id="7955-ENSDARP00000126101"/>
<dbReference type="GeneID" id="402898"/>
<dbReference type="KEGG" id="dre:402898"/>
<dbReference type="AGR" id="ZFIN:ZDB-GENE-050113-2"/>
<dbReference type="CTD" id="29062"/>
<dbReference type="ZFIN" id="ZDB-GENE-050113-2">
    <property type="gene designation" value="wdr91"/>
</dbReference>
<dbReference type="eggNOG" id="KOG1333">
    <property type="taxonomic scope" value="Eukaryota"/>
</dbReference>
<dbReference type="InParanoid" id="Q6TEN6"/>
<dbReference type="OrthoDB" id="193023at2759"/>
<dbReference type="PhylomeDB" id="Q6TEN6"/>
<dbReference type="TreeFam" id="TF317339"/>
<dbReference type="PRO" id="PR:Q6TEN6"/>
<dbReference type="Proteomes" id="UP000000437">
    <property type="component" value="Chromosome 21"/>
</dbReference>
<dbReference type="GO" id="GO:0005829">
    <property type="term" value="C:cytosol"/>
    <property type="evidence" value="ECO:0000250"/>
    <property type="project" value="UniProtKB"/>
</dbReference>
<dbReference type="GO" id="GO:0031901">
    <property type="term" value="C:early endosome membrane"/>
    <property type="evidence" value="ECO:0000250"/>
    <property type="project" value="UniProtKB"/>
</dbReference>
<dbReference type="GO" id="GO:0010008">
    <property type="term" value="C:endosome membrane"/>
    <property type="evidence" value="ECO:0000250"/>
    <property type="project" value="UniProtKB"/>
</dbReference>
<dbReference type="GO" id="GO:0031902">
    <property type="term" value="C:late endosome membrane"/>
    <property type="evidence" value="ECO:0000250"/>
    <property type="project" value="UniProtKB"/>
</dbReference>
<dbReference type="GO" id="GO:0141039">
    <property type="term" value="F:phosphatidylinositol 3-kinase inhibitor activity"/>
    <property type="evidence" value="ECO:0000250"/>
    <property type="project" value="UniProtKB"/>
</dbReference>
<dbReference type="GO" id="GO:0035014">
    <property type="term" value="F:phosphatidylinositol 3-kinase regulator activity"/>
    <property type="evidence" value="ECO:0000318"/>
    <property type="project" value="GO_Central"/>
</dbReference>
<dbReference type="GO" id="GO:0045022">
    <property type="term" value="P:early endosome to late endosome transport"/>
    <property type="evidence" value="ECO:0000250"/>
    <property type="project" value="UniProtKB"/>
</dbReference>
<dbReference type="GO" id="GO:0051898">
    <property type="term" value="P:negative regulation of phosphatidylinositol 3-kinase/protein kinase B signal transduction"/>
    <property type="evidence" value="ECO:0007669"/>
    <property type="project" value="InterPro"/>
</dbReference>
<dbReference type="FunFam" id="2.130.10.10:FF:000276">
    <property type="entry name" value="WD repeat-containing protein 91"/>
    <property type="match status" value="1"/>
</dbReference>
<dbReference type="FunFam" id="2.130.10.10:FF:001230">
    <property type="entry name" value="WD repeat-containing protein 91"/>
    <property type="match status" value="1"/>
</dbReference>
<dbReference type="Gene3D" id="2.130.10.10">
    <property type="entry name" value="YVTN repeat-like/Quinoprotein amine dehydrogenase"/>
    <property type="match status" value="3"/>
</dbReference>
<dbReference type="InterPro" id="IPR056327">
    <property type="entry name" value="ARMC9_CTLH-like_dom"/>
</dbReference>
<dbReference type="InterPro" id="IPR015943">
    <property type="entry name" value="WD40/YVTN_repeat-like_dom_sf"/>
</dbReference>
<dbReference type="InterPro" id="IPR036322">
    <property type="entry name" value="WD40_repeat_dom_sf"/>
</dbReference>
<dbReference type="InterPro" id="IPR001680">
    <property type="entry name" value="WD40_rpt"/>
</dbReference>
<dbReference type="InterPro" id="IPR039724">
    <property type="entry name" value="WDR91"/>
</dbReference>
<dbReference type="PANTHER" id="PTHR13083">
    <property type="entry name" value="WD REPEAT-CONTAINING PROTEIN 91"/>
    <property type="match status" value="1"/>
</dbReference>
<dbReference type="PANTHER" id="PTHR13083:SF3">
    <property type="entry name" value="WD REPEAT-CONTAINING PROTEIN 91"/>
    <property type="match status" value="1"/>
</dbReference>
<dbReference type="Pfam" id="PF23138">
    <property type="entry name" value="CTLH_Armc9"/>
    <property type="match status" value="1"/>
</dbReference>
<dbReference type="Pfam" id="PF00400">
    <property type="entry name" value="WD40"/>
    <property type="match status" value="4"/>
</dbReference>
<dbReference type="SMART" id="SM00320">
    <property type="entry name" value="WD40"/>
    <property type="match status" value="5"/>
</dbReference>
<dbReference type="SUPFAM" id="SSF50978">
    <property type="entry name" value="WD40 repeat-like"/>
    <property type="match status" value="1"/>
</dbReference>
<dbReference type="PROSITE" id="PS50082">
    <property type="entry name" value="WD_REPEATS_2"/>
    <property type="match status" value="2"/>
</dbReference>
<dbReference type="PROSITE" id="PS50294">
    <property type="entry name" value="WD_REPEATS_REGION"/>
    <property type="match status" value="1"/>
</dbReference>
<proteinExistence type="evidence at protein level"/>
<accession>Q6TEN6</accession>
<reference key="1">
    <citation type="journal article" date="2004" name="Proc. Natl. Acad. Sci. U.S.A.">
        <title>Hematopoietic gene expression profile in zebrafish kidney marrow.</title>
        <authorList>
            <person name="Song H.-D."/>
            <person name="Sun X.-J."/>
            <person name="Deng M."/>
            <person name="Zhang G.-W."/>
            <person name="Zhou Y."/>
            <person name="Wu X.-Y."/>
            <person name="Sheng Y."/>
            <person name="Chen Y."/>
            <person name="Ruan Z."/>
            <person name="Jiang C.-L."/>
            <person name="Fan H.-Y."/>
            <person name="Zon L.I."/>
            <person name="Kanki J.P."/>
            <person name="Liu T.X."/>
            <person name="Look A.T."/>
            <person name="Chen Z."/>
        </authorList>
    </citation>
    <scope>NUCLEOTIDE SEQUENCE [LARGE SCALE MRNA]</scope>
    <source>
        <tissue>Kidney marrow</tissue>
    </source>
</reference>
<reference key="2">
    <citation type="journal article" date="2008" name="J. Proteome Res.">
        <title>Online automated in vivo zebrafish phosphoproteomics: from large-scale analysis down to a single embryo.</title>
        <authorList>
            <person name="Lemeer S."/>
            <person name="Pinkse M.W.H."/>
            <person name="Mohammed S."/>
            <person name="van Breukelen B."/>
            <person name="den Hertog J."/>
            <person name="Slijper M."/>
            <person name="Heck A.J.R."/>
        </authorList>
    </citation>
    <scope>PHOSPHORYLATION [LARGE SCALE ANALYSIS] AT SER-274</scope>
    <scope>IDENTIFICATION BY MASS SPECTROMETRY</scope>
    <source>
        <tissue>Embryo</tissue>
    </source>
</reference>
<sequence length="724" mass="80767">MASAVERTDDLVREYLIYRGFTSTLKHLDSEIKTDKEKGFRVDKIMDQLQLLIQSCDLTGLKEYWANLERRLFCRLEDVYKPTVSKLRTSLYRFYLIHTVQVKNVEKTQEFFQKQALELQAQAEWRDWFSLPFIPAPEQNPSFSAYFSRQWADTFLVSLHNFLSVLFQCMPLPALLSFDSEVQRITSLQEDNEQLRQTVFALQGESRLKKDEQMVHHKLPPYVQHMDRLGDTELDLVSSQRNVNMATPSRNFFSTFLPQGRRAPGRTAPGPQSSPTQSALGRKDAAASMQSSKAKDKEVKPPSVSSMTAELSTSHPRQRRHQDHEKERKELFSKHAAQGSEKKTDSDPDTQTEAPPDQTDSANQTRVCDVGGAGAEQPFIKLSQEEYGEHHSSIMHCRVDCSGRRVASLDVDGVVKVWAFNPIMQTKATIMSKSPLLSLEWAAKPDRLLLLGSGVGTVKLYDTDAKKCLYEMTIDDVHPRILSLACSPSGTSFVCSAAAHSGAVMESEPRGSAPVSGQLLLWDTKTVKQQLQFALEPGPVAINCTAFNHNGNLLVTGAADGIIRLFDMQRYESALSWKAHDGEVYSVEFSYDENTVFSIGEDGKFVQWNIHRCGVKQSEYSLSQDAVGPFVLSGYSGYKQVQVPRGRLFAFDSEGQHVLTCSSTGGNIYRLNKAEAGLESVLSLAGHKAPVVTVDWCSAMDCGTCLTASMDGKIKLSTLLAQKP</sequence>
<comment type="function">
    <text evidence="1">Functions as a negative regulator of the PI3 kinase/PI3K activity associated with endosomal membranes. By modifying the phosphatidylinositol 3-phosphate/PtdInsP3 content of endosomal membranes may regulate endosome fusion, recycling, sorting and early to late endosome transport.</text>
</comment>
<comment type="subcellular location">
    <subcellularLocation>
        <location evidence="1">Early endosome membrane</location>
        <topology evidence="1">Peripheral membrane protein</topology>
    </subcellularLocation>
    <subcellularLocation>
        <location evidence="1">Late endosome membrane</location>
    </subcellularLocation>
</comment>
<comment type="similarity">
    <text evidence="5">Belongs to the WD repeat WDR91 family.</text>
</comment>
<comment type="sequence caution" evidence="5">
    <conflict type="erroneous initiation">
        <sequence resource="EMBL-CDS" id="AAQ97989"/>
    </conflict>
</comment>
<feature type="chain" id="PRO_0000295750" description="WD repeat-containing protein 91">
    <location>
        <begin position="1"/>
        <end position="724"/>
    </location>
</feature>
<feature type="repeat" description="WD 1">
    <location>
        <begin position="389"/>
        <end position="428"/>
    </location>
</feature>
<feature type="repeat" description="WD 2">
    <location>
        <begin position="431"/>
        <end position="471"/>
    </location>
</feature>
<feature type="repeat" description="WD 3">
    <location>
        <begin position="499"/>
        <end position="532"/>
    </location>
</feature>
<feature type="repeat" description="WD 4">
    <location>
        <begin position="537"/>
        <end position="576"/>
    </location>
</feature>
<feature type="repeat" description="WD 5">
    <location>
        <begin position="579"/>
        <end position="618"/>
    </location>
</feature>
<feature type="repeat" description="WD 6">
    <location>
        <begin position="641"/>
        <end position="679"/>
    </location>
</feature>
<feature type="repeat" description="WD 7">
    <location>
        <begin position="686"/>
        <end position="724"/>
    </location>
</feature>
<feature type="region of interest" description="Disordered" evidence="3">
    <location>
        <begin position="249"/>
        <end position="365"/>
    </location>
</feature>
<feature type="coiled-coil region" evidence="2">
    <location>
        <begin position="178"/>
        <end position="207"/>
    </location>
</feature>
<feature type="compositionally biased region" description="Polar residues" evidence="3">
    <location>
        <begin position="270"/>
        <end position="279"/>
    </location>
</feature>
<feature type="compositionally biased region" description="Polar residues" evidence="3">
    <location>
        <begin position="303"/>
        <end position="315"/>
    </location>
</feature>
<feature type="compositionally biased region" description="Basic and acidic residues" evidence="3">
    <location>
        <begin position="322"/>
        <end position="333"/>
    </location>
</feature>
<feature type="compositionally biased region" description="Polar residues" evidence="3">
    <location>
        <begin position="349"/>
        <end position="365"/>
    </location>
</feature>
<feature type="modified residue" description="Phosphoserine" evidence="4">
    <location>
        <position position="274"/>
    </location>
</feature>
<protein>
    <recommendedName>
        <fullName evidence="1">WD repeat-containing protein 91</fullName>
    </recommendedName>
</protein>
<organism>
    <name type="scientific">Danio rerio</name>
    <name type="common">Zebrafish</name>
    <name type="synonym">Brachydanio rerio</name>
    <dbReference type="NCBI Taxonomy" id="7955"/>
    <lineage>
        <taxon>Eukaryota</taxon>
        <taxon>Metazoa</taxon>
        <taxon>Chordata</taxon>
        <taxon>Craniata</taxon>
        <taxon>Vertebrata</taxon>
        <taxon>Euteleostomi</taxon>
        <taxon>Actinopterygii</taxon>
        <taxon>Neopterygii</taxon>
        <taxon>Teleostei</taxon>
        <taxon>Ostariophysi</taxon>
        <taxon>Cypriniformes</taxon>
        <taxon>Danionidae</taxon>
        <taxon>Danioninae</taxon>
        <taxon>Danio</taxon>
    </lineage>
</organism>
<keyword id="KW-0175">Coiled coil</keyword>
<keyword id="KW-0967">Endosome</keyword>
<keyword id="KW-0472">Membrane</keyword>
<keyword id="KW-0597">Phosphoprotein</keyword>
<keyword id="KW-1185">Reference proteome</keyword>
<keyword id="KW-0677">Repeat</keyword>
<keyword id="KW-0853">WD repeat</keyword>
<name>WDR91_DANRE</name>
<evidence type="ECO:0000250" key="1">
    <source>
        <dbReference type="UniProtKB" id="A4D1P6"/>
    </source>
</evidence>
<evidence type="ECO:0000255" key="2"/>
<evidence type="ECO:0000256" key="3">
    <source>
        <dbReference type="SAM" id="MobiDB-lite"/>
    </source>
</evidence>
<evidence type="ECO:0000269" key="4">
    <source>
    </source>
</evidence>
<evidence type="ECO:0000305" key="5"/>